<protein>
    <recommendedName>
        <fullName evidence="1">Anaerobic glycerol-3-phosphate dehydrogenase subunit B</fullName>
        <shortName evidence="1">Anaerobic G-3-P dehydrogenase subunit B</shortName>
        <shortName evidence="1">Anaerobic G3Pdhase B</shortName>
        <ecNumber evidence="1">1.1.5.3</ecNumber>
    </recommendedName>
</protein>
<name>GLPB_ECO81</name>
<feature type="chain" id="PRO_1000148359" description="Anaerobic glycerol-3-phosphate dehydrogenase subunit B">
    <location>
        <begin position="1"/>
        <end position="419"/>
    </location>
</feature>
<dbReference type="EC" id="1.1.5.3" evidence="1"/>
<dbReference type="EMBL" id="CU928162">
    <property type="protein sequence ID" value="CAR08888.2"/>
    <property type="molecule type" value="Genomic_DNA"/>
</dbReference>
<dbReference type="RefSeq" id="WP_001209934.1">
    <property type="nucleotide sequence ID" value="NC_011745.1"/>
</dbReference>
<dbReference type="KEGG" id="ecq:ECED1_2707"/>
<dbReference type="HOGENOM" id="CLU_047793_0_0_6"/>
<dbReference type="UniPathway" id="UPA00618">
    <property type="reaction ID" value="UER00673"/>
</dbReference>
<dbReference type="Proteomes" id="UP000000748">
    <property type="component" value="Chromosome"/>
</dbReference>
<dbReference type="GO" id="GO:0009331">
    <property type="term" value="C:glycerol-3-phosphate dehydrogenase (FAD) complex"/>
    <property type="evidence" value="ECO:0007669"/>
    <property type="project" value="InterPro"/>
</dbReference>
<dbReference type="GO" id="GO:0004368">
    <property type="term" value="F:glycerol-3-phosphate dehydrogenase (quinone) activity"/>
    <property type="evidence" value="ECO:0007669"/>
    <property type="project" value="UniProtKB-UniRule"/>
</dbReference>
<dbReference type="GO" id="GO:0009061">
    <property type="term" value="P:anaerobic respiration"/>
    <property type="evidence" value="ECO:0007669"/>
    <property type="project" value="TreeGrafter"/>
</dbReference>
<dbReference type="GO" id="GO:0019563">
    <property type="term" value="P:glycerol catabolic process"/>
    <property type="evidence" value="ECO:0007669"/>
    <property type="project" value="UniProtKB-UniRule"/>
</dbReference>
<dbReference type="GO" id="GO:0046168">
    <property type="term" value="P:glycerol-3-phosphate catabolic process"/>
    <property type="evidence" value="ECO:0007669"/>
    <property type="project" value="TreeGrafter"/>
</dbReference>
<dbReference type="Gene3D" id="3.50.50.60">
    <property type="entry name" value="FAD/NAD(P)-binding domain"/>
    <property type="match status" value="1"/>
</dbReference>
<dbReference type="HAMAP" id="MF_00753">
    <property type="entry name" value="Glycerol3P_GlpB"/>
    <property type="match status" value="1"/>
</dbReference>
<dbReference type="InterPro" id="IPR003953">
    <property type="entry name" value="FAD-dep_OxRdtase_2_FAD-bd"/>
</dbReference>
<dbReference type="InterPro" id="IPR050315">
    <property type="entry name" value="FAD-oxidoreductase_2"/>
</dbReference>
<dbReference type="InterPro" id="IPR036188">
    <property type="entry name" value="FAD/NAD-bd_sf"/>
</dbReference>
<dbReference type="InterPro" id="IPR009158">
    <property type="entry name" value="G3P_DH_GlpB_su"/>
</dbReference>
<dbReference type="NCBIfam" id="TIGR03378">
    <property type="entry name" value="glycerol3P_GlpB"/>
    <property type="match status" value="1"/>
</dbReference>
<dbReference type="NCBIfam" id="NF003718">
    <property type="entry name" value="PRK05329.1-1"/>
    <property type="match status" value="1"/>
</dbReference>
<dbReference type="NCBIfam" id="NF003719">
    <property type="entry name" value="PRK05329.1-2"/>
    <property type="match status" value="1"/>
</dbReference>
<dbReference type="NCBIfam" id="NF003720">
    <property type="entry name" value="PRK05329.1-3"/>
    <property type="match status" value="1"/>
</dbReference>
<dbReference type="NCBIfam" id="NF003721">
    <property type="entry name" value="PRK05329.1-4"/>
    <property type="match status" value="1"/>
</dbReference>
<dbReference type="PANTHER" id="PTHR43400:SF11">
    <property type="entry name" value="ANAEROBIC GLYCEROL-3-PHOSPHATE DEHYDROGENASE SUBUNIT B"/>
    <property type="match status" value="1"/>
</dbReference>
<dbReference type="PANTHER" id="PTHR43400">
    <property type="entry name" value="FUMARATE REDUCTASE"/>
    <property type="match status" value="1"/>
</dbReference>
<dbReference type="Pfam" id="PF00890">
    <property type="entry name" value="FAD_binding_2"/>
    <property type="match status" value="1"/>
</dbReference>
<dbReference type="PIRSF" id="PIRSF000141">
    <property type="entry name" value="Anaerobic_G3P_dh"/>
    <property type="match status" value="1"/>
</dbReference>
<dbReference type="SUPFAM" id="SSF51905">
    <property type="entry name" value="FAD/NAD(P)-binding domain"/>
    <property type="match status" value="1"/>
</dbReference>
<proteinExistence type="inferred from homology"/>
<comment type="function">
    <text evidence="1">Conversion of glycerol 3-phosphate to dihydroxyacetone. Uses fumarate or nitrate as electron acceptor.</text>
</comment>
<comment type="catalytic activity">
    <reaction evidence="1">
        <text>a quinone + sn-glycerol 3-phosphate = dihydroxyacetone phosphate + a quinol</text>
        <dbReference type="Rhea" id="RHEA:18977"/>
        <dbReference type="ChEBI" id="CHEBI:24646"/>
        <dbReference type="ChEBI" id="CHEBI:57597"/>
        <dbReference type="ChEBI" id="CHEBI:57642"/>
        <dbReference type="ChEBI" id="CHEBI:132124"/>
        <dbReference type="EC" id="1.1.5.3"/>
    </reaction>
</comment>
<comment type="cofactor">
    <cofactor evidence="1">
        <name>FMN</name>
        <dbReference type="ChEBI" id="CHEBI:58210"/>
    </cofactor>
</comment>
<comment type="pathway">
    <text evidence="1">Polyol metabolism; glycerol degradation via glycerol kinase pathway; glycerone phosphate from sn-glycerol 3-phosphate (anaerobic route): step 1/1.</text>
</comment>
<comment type="subunit">
    <text evidence="1">Composed of a catalytic GlpA/B dimer and of membrane bound GlpC.</text>
</comment>
<comment type="similarity">
    <text evidence="1">Belongs to the anaerobic G-3-P dehydrogenase subunit B family.</text>
</comment>
<gene>
    <name evidence="1" type="primary">glpB</name>
    <name type="ordered locus">ECED1_2707</name>
</gene>
<reference key="1">
    <citation type="journal article" date="2009" name="PLoS Genet.">
        <title>Organised genome dynamics in the Escherichia coli species results in highly diverse adaptive paths.</title>
        <authorList>
            <person name="Touchon M."/>
            <person name="Hoede C."/>
            <person name="Tenaillon O."/>
            <person name="Barbe V."/>
            <person name="Baeriswyl S."/>
            <person name="Bidet P."/>
            <person name="Bingen E."/>
            <person name="Bonacorsi S."/>
            <person name="Bouchier C."/>
            <person name="Bouvet O."/>
            <person name="Calteau A."/>
            <person name="Chiapello H."/>
            <person name="Clermont O."/>
            <person name="Cruveiller S."/>
            <person name="Danchin A."/>
            <person name="Diard M."/>
            <person name="Dossat C."/>
            <person name="Karoui M.E."/>
            <person name="Frapy E."/>
            <person name="Garry L."/>
            <person name="Ghigo J.M."/>
            <person name="Gilles A.M."/>
            <person name="Johnson J."/>
            <person name="Le Bouguenec C."/>
            <person name="Lescat M."/>
            <person name="Mangenot S."/>
            <person name="Martinez-Jehanne V."/>
            <person name="Matic I."/>
            <person name="Nassif X."/>
            <person name="Oztas S."/>
            <person name="Petit M.A."/>
            <person name="Pichon C."/>
            <person name="Rouy Z."/>
            <person name="Ruf C.S."/>
            <person name="Schneider D."/>
            <person name="Tourret J."/>
            <person name="Vacherie B."/>
            <person name="Vallenet D."/>
            <person name="Medigue C."/>
            <person name="Rocha E.P.C."/>
            <person name="Denamur E."/>
        </authorList>
    </citation>
    <scope>NUCLEOTIDE SEQUENCE [LARGE SCALE GENOMIC DNA]</scope>
    <source>
        <strain>ED1a</strain>
    </source>
</reference>
<accession>B7MXS2</accession>
<evidence type="ECO:0000255" key="1">
    <source>
        <dbReference type="HAMAP-Rule" id="MF_00753"/>
    </source>
</evidence>
<keyword id="KW-0285">Flavoprotein</keyword>
<keyword id="KW-0288">FMN</keyword>
<keyword id="KW-0560">Oxidoreductase</keyword>
<organism>
    <name type="scientific">Escherichia coli O81 (strain ED1a)</name>
    <dbReference type="NCBI Taxonomy" id="585397"/>
    <lineage>
        <taxon>Bacteria</taxon>
        <taxon>Pseudomonadati</taxon>
        <taxon>Pseudomonadota</taxon>
        <taxon>Gammaproteobacteria</taxon>
        <taxon>Enterobacterales</taxon>
        <taxon>Enterobacteriaceae</taxon>
        <taxon>Escherichia</taxon>
    </lineage>
</organism>
<sequence length="419" mass="45380">MRFDTVIMGGGLAGLLCGLQLQKHGLRCAIVTRGQSALHFSSGSLDLLSHLPDGQPVTDIHSGLESLRQQAPAHPYTLLGPQRVLDLACQAQALIAESGAQLQGSVELAHQRITPLGTLRSTWLSSPEVPVWPLPAKKICVVGISGLMDFQAHLAAASLRELDLKVETAEIELPELDVLRNNATEFRAVNIARFLDNEENWPLLLDALIPVANTCEMILMPACFGLADDKLWHWLNEKLPCSLMLLPTLPPSVLGIRLQNQLQRQFVRQGGVWMPGDEVKKVTCKNGVVNEIWTRNHADIPLRPRFAVLASGSFFSGGLVAERDGIREPILGLDVLQTATRGEWYKGDFFAPQPWQQFGVTTDEALRPSQAGQTIENLFAIGSVLGGFDPIAQGCGGGVCAVSALHAAQQIAQRAGGQQ</sequence>